<dbReference type="EC" id="2.7.11.1"/>
<dbReference type="EMBL" id="DP000043">
    <property type="protein sequence ID" value="ABO52965.1"/>
    <property type="molecule type" value="Genomic_DNA"/>
</dbReference>
<dbReference type="RefSeq" id="NP_001162148.1">
    <property type="nucleotide sequence ID" value="NM_001168677.1"/>
</dbReference>
<dbReference type="SMR" id="A4K2T0"/>
<dbReference type="FunCoup" id="A4K2T0">
    <property type="interactions" value="4309"/>
</dbReference>
<dbReference type="STRING" id="9544.ENSMMUP00000017358"/>
<dbReference type="PaxDb" id="9544-ENSMMUP00000017358"/>
<dbReference type="GeneID" id="717730"/>
<dbReference type="KEGG" id="mcc:717730"/>
<dbReference type="CTD" id="6789"/>
<dbReference type="eggNOG" id="KOG0574">
    <property type="taxonomic scope" value="Eukaryota"/>
</dbReference>
<dbReference type="InParanoid" id="A4K2T0"/>
<dbReference type="OrthoDB" id="8693905at2759"/>
<dbReference type="Proteomes" id="UP000006718">
    <property type="component" value="Unassembled WGS sequence"/>
</dbReference>
<dbReference type="GO" id="GO:0005737">
    <property type="term" value="C:cytoplasm"/>
    <property type="evidence" value="ECO:0000250"/>
    <property type="project" value="UniProtKB"/>
</dbReference>
<dbReference type="GO" id="GO:0005634">
    <property type="term" value="C:nucleus"/>
    <property type="evidence" value="ECO:0000250"/>
    <property type="project" value="UniProtKB"/>
</dbReference>
<dbReference type="GO" id="GO:0005524">
    <property type="term" value="F:ATP binding"/>
    <property type="evidence" value="ECO:0007669"/>
    <property type="project" value="UniProtKB-KW"/>
</dbReference>
<dbReference type="GO" id="GO:0046872">
    <property type="term" value="F:metal ion binding"/>
    <property type="evidence" value="ECO:0007669"/>
    <property type="project" value="UniProtKB-KW"/>
</dbReference>
<dbReference type="GO" id="GO:0106310">
    <property type="term" value="F:protein serine kinase activity"/>
    <property type="evidence" value="ECO:0007669"/>
    <property type="project" value="RHEA"/>
</dbReference>
<dbReference type="GO" id="GO:0004674">
    <property type="term" value="F:protein serine/threonine kinase activity"/>
    <property type="evidence" value="ECO:0000250"/>
    <property type="project" value="UniProtKB"/>
</dbReference>
<dbReference type="GO" id="GO:0006915">
    <property type="term" value="P:apoptotic process"/>
    <property type="evidence" value="ECO:0000250"/>
    <property type="project" value="UniProtKB"/>
</dbReference>
<dbReference type="GO" id="GO:0035329">
    <property type="term" value="P:hippo signaling"/>
    <property type="evidence" value="ECO:0000250"/>
    <property type="project" value="UniProtKB"/>
</dbReference>
<dbReference type="GO" id="GO:0035556">
    <property type="term" value="P:intracellular signal transduction"/>
    <property type="evidence" value="ECO:0000318"/>
    <property type="project" value="GO_Central"/>
</dbReference>
<dbReference type="GO" id="GO:0090090">
    <property type="term" value="P:negative regulation of canonical Wnt signaling pathway"/>
    <property type="evidence" value="ECO:0000318"/>
    <property type="project" value="GO_Central"/>
</dbReference>
<dbReference type="GO" id="GO:0043065">
    <property type="term" value="P:positive regulation of apoptotic process"/>
    <property type="evidence" value="ECO:0000318"/>
    <property type="project" value="GO_Central"/>
</dbReference>
<dbReference type="GO" id="GO:0051262">
    <property type="term" value="P:protein tetramerization"/>
    <property type="evidence" value="ECO:0007669"/>
    <property type="project" value="InterPro"/>
</dbReference>
<dbReference type="GO" id="GO:0043408">
    <property type="term" value="P:regulation of MAPK cascade"/>
    <property type="evidence" value="ECO:0000318"/>
    <property type="project" value="GO_Central"/>
</dbReference>
<dbReference type="CDD" id="cd21887">
    <property type="entry name" value="SARAH_MST1"/>
    <property type="match status" value="1"/>
</dbReference>
<dbReference type="CDD" id="cd06612">
    <property type="entry name" value="STKc_MST1_2"/>
    <property type="match status" value="1"/>
</dbReference>
<dbReference type="FunFam" id="1.10.510.10:FF:000075">
    <property type="entry name" value="Serine/threonine-protein kinase 3"/>
    <property type="match status" value="1"/>
</dbReference>
<dbReference type="FunFam" id="3.30.200.20:FF:000410">
    <property type="entry name" value="Serine/threonine-protein kinase 3"/>
    <property type="match status" value="1"/>
</dbReference>
<dbReference type="FunFam" id="4.10.170.10:FF:000002">
    <property type="entry name" value="serine/threonine-protein kinase 3"/>
    <property type="match status" value="1"/>
</dbReference>
<dbReference type="FunFam" id="1.10.287.4270:FF:000004">
    <property type="entry name" value="Serine/threonine-protein kinase 3/4"/>
    <property type="match status" value="1"/>
</dbReference>
<dbReference type="FunFam" id="1.10.287.4270:FF:000002">
    <property type="entry name" value="Serine/threonine-protein kinase 4"/>
    <property type="match status" value="1"/>
</dbReference>
<dbReference type="Gene3D" id="1.10.287.4270">
    <property type="match status" value="1"/>
</dbReference>
<dbReference type="Gene3D" id="4.10.170.10">
    <property type="entry name" value="p53-like tetramerisation domain"/>
    <property type="match status" value="1"/>
</dbReference>
<dbReference type="Gene3D" id="1.10.510.10">
    <property type="entry name" value="Transferase(Phosphotransferase) domain 1"/>
    <property type="match status" value="1"/>
</dbReference>
<dbReference type="InterPro" id="IPR011009">
    <property type="entry name" value="Kinase-like_dom_sf"/>
</dbReference>
<dbReference type="InterPro" id="IPR024205">
    <property type="entry name" value="Mst1_2_SARAH_domain"/>
</dbReference>
<dbReference type="InterPro" id="IPR036674">
    <property type="entry name" value="p53_tetramer_sf"/>
</dbReference>
<dbReference type="InterPro" id="IPR000719">
    <property type="entry name" value="Prot_kinase_dom"/>
</dbReference>
<dbReference type="InterPro" id="IPR017441">
    <property type="entry name" value="Protein_kinase_ATP_BS"/>
</dbReference>
<dbReference type="InterPro" id="IPR011524">
    <property type="entry name" value="SARAH_dom"/>
</dbReference>
<dbReference type="InterPro" id="IPR050629">
    <property type="entry name" value="STE20/SPS1-PAK"/>
</dbReference>
<dbReference type="PANTHER" id="PTHR48012:SF2">
    <property type="entry name" value="STERILE20-LIKE KINASE, ISOFORM B"/>
    <property type="match status" value="1"/>
</dbReference>
<dbReference type="PANTHER" id="PTHR48012">
    <property type="entry name" value="STERILE20-LIKE KINASE, ISOFORM B-RELATED"/>
    <property type="match status" value="1"/>
</dbReference>
<dbReference type="Pfam" id="PF11629">
    <property type="entry name" value="Mst1_SARAH"/>
    <property type="match status" value="1"/>
</dbReference>
<dbReference type="Pfam" id="PF00069">
    <property type="entry name" value="Pkinase"/>
    <property type="match status" value="1"/>
</dbReference>
<dbReference type="SMART" id="SM00220">
    <property type="entry name" value="S_TKc"/>
    <property type="match status" value="1"/>
</dbReference>
<dbReference type="SUPFAM" id="SSF56112">
    <property type="entry name" value="Protein kinase-like (PK-like)"/>
    <property type="match status" value="1"/>
</dbReference>
<dbReference type="PROSITE" id="PS00107">
    <property type="entry name" value="PROTEIN_KINASE_ATP"/>
    <property type="match status" value="1"/>
</dbReference>
<dbReference type="PROSITE" id="PS50011">
    <property type="entry name" value="PROTEIN_KINASE_DOM"/>
    <property type="match status" value="1"/>
</dbReference>
<dbReference type="PROSITE" id="PS50951">
    <property type="entry name" value="SARAH"/>
    <property type="match status" value="1"/>
</dbReference>
<sequence>METVQLRNPPRRQLKKLDEDSLTKQPEEVFDVLEKLGEGSYGSVYKAIHKETGQIVAIKQVPVESDLQEIIKEISIMQQCDSPHVVKYYGSYFKNTDLWIVMEYCGAGSVSDIIRLRNKTLTEDEIATILQSTLKGLEYLHFMRKIHRDIKAGNILLNTEGHAKLADFGVAGQLTDTMAKRNTVIGTPFWMAPEVIQEIGYNCVADIWSLGITAIEMAEGKPPYADIHPMRAIFMIPTNPPPTFRKPELWSDNFTDFVKQCLVKSPEQRATATQLLQHPFVKSAKGVSILRDLINEAMDVKLKRQESQQREVDQDDEENSEEDEMDSGTMVRAVGDEMGTVRVASTMTDGASTMIEHDDTLPSQLGTMVINTEDEEEEGTMKRRDETMQPAKPSFLEYFEQKEKENQINSFGKSVPGPLKNSSDWKIPQDGDYEFLKSWTVEDLQKRLLALDPMMEQEIEEIRQKYQSKRQPILDAIEAKKRRQQNF</sequence>
<gene>
    <name type="primary">STK4</name>
</gene>
<reference key="1">
    <citation type="journal article" date="2007" name="Genome Res.">
        <title>Comparative sequence analyses reveal rapid and divergent evolutionary changes of the WFDC locus in the primate lineage.</title>
        <authorList>
            <consortium name="NISC comparative sequencing program"/>
            <person name="Hurle B."/>
            <person name="Swanson W."/>
            <person name="Green E.D."/>
        </authorList>
    </citation>
    <scope>NUCLEOTIDE SEQUENCE [GENOMIC DNA]</scope>
</reference>
<accession>A4K2T0</accession>
<feature type="chain" id="PRO_0000289627" description="Serine/threonine-protein kinase 4">
    <location>
        <begin position="1"/>
        <end position="487"/>
    </location>
</feature>
<feature type="chain" id="PRO_0000413739" description="Serine/threonine-protein kinase 4 37kDa subunit" evidence="1">
    <location>
        <begin position="1"/>
        <end position="326"/>
    </location>
</feature>
<feature type="chain" id="PRO_0000413740" description="Serine/threonine-protein kinase 4 18kDa subunit" evidence="1">
    <location>
        <begin position="327"/>
        <end position="487"/>
    </location>
</feature>
<feature type="domain" description="Protein kinase" evidence="5">
    <location>
        <begin position="30"/>
        <end position="281"/>
    </location>
</feature>
<feature type="domain" description="SARAH" evidence="6">
    <location>
        <begin position="433"/>
        <end position="480"/>
    </location>
</feature>
<feature type="region of interest" description="Disordered" evidence="7">
    <location>
        <begin position="303"/>
        <end position="332"/>
    </location>
</feature>
<feature type="coiled-coil region" evidence="4">
    <location>
        <begin position="290"/>
        <end position="310"/>
    </location>
</feature>
<feature type="compositionally biased region" description="Basic and acidic residues" evidence="7">
    <location>
        <begin position="303"/>
        <end position="312"/>
    </location>
</feature>
<feature type="compositionally biased region" description="Acidic residues" evidence="7">
    <location>
        <begin position="313"/>
        <end position="326"/>
    </location>
</feature>
<feature type="active site" description="Proton acceptor" evidence="5">
    <location>
        <position position="149"/>
    </location>
</feature>
<feature type="binding site" evidence="5">
    <location>
        <begin position="36"/>
        <end position="44"/>
    </location>
    <ligand>
        <name>ATP</name>
        <dbReference type="ChEBI" id="CHEBI:30616"/>
    </ligand>
</feature>
<feature type="binding site" evidence="5">
    <location>
        <position position="59"/>
    </location>
    <ligand>
        <name>ATP</name>
        <dbReference type="ChEBI" id="CHEBI:30616"/>
    </ligand>
</feature>
<feature type="site" description="Cleavage; by caspase-3" evidence="1">
    <location>
        <begin position="326"/>
        <end position="327"/>
    </location>
</feature>
<feature type="site" description="Cleavage; by caspase-3" evidence="1">
    <location>
        <begin position="349"/>
        <end position="350"/>
    </location>
</feature>
<feature type="modified residue" description="N-acetylmethionine" evidence="2">
    <location>
        <position position="1"/>
    </location>
</feature>
<feature type="modified residue" description="Phosphothreonine" evidence="2">
    <location>
        <position position="3"/>
    </location>
</feature>
<feature type="modified residue" description="Phosphothreonine; by autocatalysis" evidence="2">
    <location>
        <position position="183"/>
    </location>
</feature>
<feature type="modified residue" description="Phosphoserine" evidence="2">
    <location>
        <position position="265"/>
    </location>
</feature>
<feature type="modified residue" description="Phosphoserine" evidence="2">
    <location>
        <position position="320"/>
    </location>
</feature>
<feature type="modified residue" description="Phosphothreonine" evidence="2">
    <location>
        <position position="340"/>
    </location>
</feature>
<feature type="modified residue" description="Phosphothreonine" evidence="2">
    <location>
        <position position="367"/>
    </location>
</feature>
<feature type="modified residue" description="Phosphothreonine; by PKB/AKT1" evidence="2">
    <location>
        <position position="387"/>
    </location>
</feature>
<feature type="modified residue" description="Phosphoserine" evidence="2">
    <location>
        <position position="410"/>
    </location>
</feature>
<feature type="modified residue" description="Phosphoserine" evidence="2">
    <location>
        <position position="414"/>
    </location>
</feature>
<feature type="modified residue" description="Phosphotyrosine" evidence="3">
    <location>
        <position position="433"/>
    </location>
</feature>
<protein>
    <recommendedName>
        <fullName>Serine/threonine-protein kinase 4</fullName>
        <ecNumber>2.7.11.1</ecNumber>
    </recommendedName>
    <component>
        <recommendedName>
            <fullName>Serine/threonine-protein kinase 4 37kDa subunit</fullName>
            <shortName>MST1/N</shortName>
        </recommendedName>
    </component>
    <component>
        <recommendedName>
            <fullName>Serine/threonine-protein kinase 4 18kDa subunit</fullName>
            <shortName>MST1/C</shortName>
        </recommendedName>
    </component>
</protein>
<proteinExistence type="inferred from homology"/>
<evidence type="ECO:0000250" key="1"/>
<evidence type="ECO:0000250" key="2">
    <source>
        <dbReference type="UniProtKB" id="Q13043"/>
    </source>
</evidence>
<evidence type="ECO:0000250" key="3">
    <source>
        <dbReference type="UniProtKB" id="Q9JI11"/>
    </source>
</evidence>
<evidence type="ECO:0000255" key="4"/>
<evidence type="ECO:0000255" key="5">
    <source>
        <dbReference type="PROSITE-ProRule" id="PRU00159"/>
    </source>
</evidence>
<evidence type="ECO:0000255" key="6">
    <source>
        <dbReference type="PROSITE-ProRule" id="PRU00310"/>
    </source>
</evidence>
<evidence type="ECO:0000256" key="7">
    <source>
        <dbReference type="SAM" id="MobiDB-lite"/>
    </source>
</evidence>
<evidence type="ECO:0000305" key="8"/>
<organism>
    <name type="scientific">Macaca mulatta</name>
    <name type="common">Rhesus macaque</name>
    <dbReference type="NCBI Taxonomy" id="9544"/>
    <lineage>
        <taxon>Eukaryota</taxon>
        <taxon>Metazoa</taxon>
        <taxon>Chordata</taxon>
        <taxon>Craniata</taxon>
        <taxon>Vertebrata</taxon>
        <taxon>Euteleostomi</taxon>
        <taxon>Mammalia</taxon>
        <taxon>Eutheria</taxon>
        <taxon>Euarchontoglires</taxon>
        <taxon>Primates</taxon>
        <taxon>Haplorrhini</taxon>
        <taxon>Catarrhini</taxon>
        <taxon>Cercopithecidae</taxon>
        <taxon>Cercopithecinae</taxon>
        <taxon>Macaca</taxon>
    </lineage>
</organism>
<comment type="function">
    <text evidence="2 3">Stress-activated, pro-apoptotic kinase which, following caspase-cleavage, enters the nucleus and induces chromatin condensation followed by internucleosomal DNA fragmentation. Key component of the Hippo signaling pathway which plays a pivotal role in organ size control and tumor suppression by restricting proliferation and promoting apoptosis. The core of this pathway is composed of a kinase cascade wherein STK3/MST2 and STK4/MST1, in complex with its regulatory protein SAV1, phosphorylates and activates LATS1/2 in complex with its regulatory protein MOB1, which in turn phosphorylates and inactivates YAP1 oncoprotein and WWTR1/TAZ. Phosphorylation of YAP1 by LATS2 inhibits its translocation into the nucleus to regulate cellular genes important for cell proliferation, cell death, and cell migration. STK3/MST2 and STK4/MST1 are required to repress proliferation of mature hepatocytes, to prevent activation of facultative adult liver stem cells (oval cells), and to inhibit tumor formation. Phosphorylates 'Ser-14' of histone H2B (H2BS14ph) during apoptosis. Phosphorylates FOXO3 upon oxidative stress, which results in its nuclear translocation and cell death initiation. Phosphorylates MOBKL1A, MOBKL1B and RASSF2. Phosphorylates TNNI3 (cardiac Tn-I) and alters its binding affinity to TNNC1 (cardiac Tn-C) and TNNT2 (cardiac Tn-T). Phosphorylates FOXO1 on 'Ser-212' and regulates its activation and stimulates transcription of PMAIP1 in a FOXO1-dependent manner. Phosphorylates SIRT1 and inhibits SIRT1-mediated p53/TP53 deacetylation, thereby promoting p53/TP53 dependent transcription and apoptosis upon DNA damage. Acts as an inhibitor of PKB/AKT1. Phosphorylates AR on 'Ser-650' and suppresses its activity by intersecting with PKB/AKT1 signaling and antagonizing formation of AR-chromatin complexes.</text>
</comment>
<comment type="catalytic activity">
    <reaction evidence="2">
        <text>L-seryl-[protein] + ATP = O-phospho-L-seryl-[protein] + ADP + H(+)</text>
        <dbReference type="Rhea" id="RHEA:17989"/>
        <dbReference type="Rhea" id="RHEA-COMP:9863"/>
        <dbReference type="Rhea" id="RHEA-COMP:11604"/>
        <dbReference type="ChEBI" id="CHEBI:15378"/>
        <dbReference type="ChEBI" id="CHEBI:29999"/>
        <dbReference type="ChEBI" id="CHEBI:30616"/>
        <dbReference type="ChEBI" id="CHEBI:83421"/>
        <dbReference type="ChEBI" id="CHEBI:456216"/>
        <dbReference type="EC" id="2.7.11.1"/>
    </reaction>
    <physiologicalReaction direction="left-to-right" evidence="2">
        <dbReference type="Rhea" id="RHEA:17990"/>
    </physiologicalReaction>
</comment>
<comment type="catalytic activity">
    <reaction evidence="2">
        <text>L-threonyl-[protein] + ATP = O-phospho-L-threonyl-[protein] + ADP + H(+)</text>
        <dbReference type="Rhea" id="RHEA:46608"/>
        <dbReference type="Rhea" id="RHEA-COMP:11060"/>
        <dbReference type="Rhea" id="RHEA-COMP:11605"/>
        <dbReference type="ChEBI" id="CHEBI:15378"/>
        <dbReference type="ChEBI" id="CHEBI:30013"/>
        <dbReference type="ChEBI" id="CHEBI:30616"/>
        <dbReference type="ChEBI" id="CHEBI:61977"/>
        <dbReference type="ChEBI" id="CHEBI:456216"/>
        <dbReference type="EC" id="2.7.11.1"/>
    </reaction>
    <physiologicalReaction direction="left-to-right" evidence="2">
        <dbReference type="Rhea" id="RHEA:46609"/>
    </physiologicalReaction>
</comment>
<comment type="cofactor">
    <cofactor evidence="1">
        <name>Mg(2+)</name>
        <dbReference type="ChEBI" id="CHEBI:18420"/>
    </cofactor>
</comment>
<comment type="activity regulation">
    <text evidence="1">Inhibited by the C-terminal non-catalytic region. Activated by caspase-cleavage. Full activation also requires homodimerization and autophosphorylation of Thr-183. Activated by RASSF1 which acts by preventing its dephosphorylation (By similarity).</text>
</comment>
<comment type="subunit">
    <text evidence="2">Homodimer; mediated via the coiled-coil region. Interacts with NORE1, which inhibits autoactivation. Interacts with and stabilizes SAV1. Interacts with RASSF1. Interacts with FOXO3. Interacts with RASSF2 (via SARAH domain). Interacts with AR, PKB/AKT1, TNNI3 and SIRT1. Interacts with DLG5 (via PDZ domain 3). Interacts with MARK3 and SCRIB in the presence of DLG5.</text>
</comment>
<comment type="subcellular location">
    <subcellularLocation>
        <location evidence="1">Cytoplasm</location>
    </subcellularLocation>
    <subcellularLocation>
        <location evidence="1">Nucleus</location>
    </subcellularLocation>
    <text evidence="1">The caspase-cleaved form cycles between the nucleus and cytoplasm.</text>
</comment>
<comment type="PTM">
    <text evidence="2">Autophosphorylated on serine and threonine residues. Phosphorylation at Thr-387 by PKB/AKT1, leads to inhibition of its: kinase activity, nuclear translocation and autophosphorylation at Thr-183. It also diminishes its cleavage by caspases and its ability to phosphorylate FOXO3 (By similarity).</text>
</comment>
<comment type="PTM">
    <text evidence="1">Proteolytically cleaved by caspase-3 during apoptosis at Asp-326 and Asp-349 resulting in a 37 kDa or a 39 kDa subunit respectively. The 39 kDa subunit is further cleaved into the 37 kDa form. Proteolytic cleavage results in kinase activation and nuclear translocation of the truncated form (MST1/N). It is less likely that cleavage at Asp-349 is a prerequisite for activation as this site is not conserved in the murine ortholog (By similarity).</text>
</comment>
<comment type="similarity">
    <text evidence="8">Belongs to the protein kinase superfamily. STE Ser/Thr protein kinase family. STE20 subfamily.</text>
</comment>
<keyword id="KW-0007">Acetylation</keyword>
<keyword id="KW-0053">Apoptosis</keyword>
<keyword id="KW-0067">ATP-binding</keyword>
<keyword id="KW-0175">Coiled coil</keyword>
<keyword id="KW-0963">Cytoplasm</keyword>
<keyword id="KW-0418">Kinase</keyword>
<keyword id="KW-0460">Magnesium</keyword>
<keyword id="KW-0479">Metal-binding</keyword>
<keyword id="KW-0547">Nucleotide-binding</keyword>
<keyword id="KW-0539">Nucleus</keyword>
<keyword id="KW-0597">Phosphoprotein</keyword>
<keyword id="KW-1185">Reference proteome</keyword>
<keyword id="KW-0723">Serine/threonine-protein kinase</keyword>
<keyword id="KW-0808">Transferase</keyword>
<name>STK4_MACMU</name>